<proteinExistence type="inferred from homology"/>
<protein>
    <recommendedName>
        <fullName evidence="1">UPF0210 protein PAE3581</fullName>
    </recommendedName>
</protein>
<name>Y3581_PYRAE</name>
<reference key="1">
    <citation type="journal article" date="2002" name="Proc. Natl. Acad. Sci. U.S.A.">
        <title>Genome sequence of the hyperthermophilic crenarchaeon Pyrobaculum aerophilum.</title>
        <authorList>
            <person name="Fitz-Gibbon S.T."/>
            <person name="Ladner H."/>
            <person name="Kim U.-J."/>
            <person name="Stetter K.O."/>
            <person name="Simon M.I."/>
            <person name="Miller J.H."/>
        </authorList>
    </citation>
    <scope>NUCLEOTIDE SEQUENCE [LARGE SCALE GENOMIC DNA]</scope>
    <source>
        <strain>ATCC 51768 / DSM 7523 / JCM 9630 / CIP 104966 / NBRC 100827 / IM2</strain>
    </source>
</reference>
<dbReference type="EMBL" id="AE009441">
    <property type="protein sequence ID" value="AAL65020.1"/>
    <property type="molecule type" value="Genomic_DNA"/>
</dbReference>
<dbReference type="RefSeq" id="WP_011009487.1">
    <property type="nucleotide sequence ID" value="NC_003364.1"/>
</dbReference>
<dbReference type="SMR" id="Q8ZSU3"/>
<dbReference type="STRING" id="178306.PAE3581"/>
<dbReference type="EnsemblBacteria" id="AAL65020">
    <property type="protein sequence ID" value="AAL65020"/>
    <property type="gene ID" value="PAE3581"/>
</dbReference>
<dbReference type="GeneID" id="1466154"/>
<dbReference type="KEGG" id="pai:PAE3581"/>
<dbReference type="PATRIC" id="fig|178306.9.peg.2696"/>
<dbReference type="eggNOG" id="arCOG04321">
    <property type="taxonomic scope" value="Archaea"/>
</dbReference>
<dbReference type="HOGENOM" id="CLU_048704_0_0_2"/>
<dbReference type="InParanoid" id="Q8ZSU3"/>
<dbReference type="Proteomes" id="UP000002439">
    <property type="component" value="Chromosome"/>
</dbReference>
<dbReference type="CDD" id="cd08025">
    <property type="entry name" value="RNR_PFL_like_DUF711"/>
    <property type="match status" value="1"/>
</dbReference>
<dbReference type="Gene3D" id="3.20.70.20">
    <property type="match status" value="1"/>
</dbReference>
<dbReference type="HAMAP" id="MF_01221">
    <property type="entry name" value="UPF0210"/>
    <property type="match status" value="1"/>
</dbReference>
<dbReference type="InterPro" id="IPR007841">
    <property type="entry name" value="UPF0210"/>
</dbReference>
<dbReference type="NCBIfam" id="NF003700">
    <property type="entry name" value="PRK05313.1"/>
    <property type="match status" value="1"/>
</dbReference>
<dbReference type="PANTHER" id="PTHR37560:SF1">
    <property type="entry name" value="UPF0210 PROTEIN MJ1665"/>
    <property type="match status" value="1"/>
</dbReference>
<dbReference type="PANTHER" id="PTHR37560">
    <property type="entry name" value="UPF0210 PROTEIN SPR0218"/>
    <property type="match status" value="1"/>
</dbReference>
<dbReference type="Pfam" id="PF05167">
    <property type="entry name" value="DUF711"/>
    <property type="match status" value="1"/>
</dbReference>
<dbReference type="SUPFAM" id="SSF51998">
    <property type="entry name" value="PFL-like glycyl radical enzymes"/>
    <property type="match status" value="1"/>
</dbReference>
<organism>
    <name type="scientific">Pyrobaculum aerophilum (strain ATCC 51768 / DSM 7523 / JCM 9630 / CIP 104966 / NBRC 100827 / IM2)</name>
    <dbReference type="NCBI Taxonomy" id="178306"/>
    <lineage>
        <taxon>Archaea</taxon>
        <taxon>Thermoproteota</taxon>
        <taxon>Thermoprotei</taxon>
        <taxon>Thermoproteales</taxon>
        <taxon>Thermoproteaceae</taxon>
        <taxon>Pyrobaculum</taxon>
    </lineage>
</organism>
<sequence length="448" mass="46623">MRFDPKEIGEILEMLLFRELDIRAVTLSVNTLPAIRHRVSDTISALEELLEPYLKKLRPAVEKVASRLGVRIVTVRLAVSPVSIMLEPIGDAKSTVELAYFLDDLAGKYGVDMVGGFSAFEHAGVSRGDRALMEGLAEALNGTSRLAGFLNVASTMTGINLDAVRKSADIILSLKPHAAARFAVTANLPEDVPFMPGAYHGLGLPDAVINIAVSGPGVVEAVVRNLPEADARTLHDAIKRAAFKITRLGELVGREVSKELGVPFGAVDLSVAPSPKVGDSVAAILEAMGLPRVGSPGSVFALALFVDAVKKGGAMAVSNIGGLSGAFIPVSEDAVMAQAAAEGAVTLDTLKAMAAVCNTGLDMIGIPGDASADVVAAIIADVMALAVYLDKPLGVRLVPVPGGKPGDYYDLGGLYGKVAVMEISRYSKIPLMSRGGTAPPGVERLKKG</sequence>
<gene>
    <name type="ordered locus">PAE3581</name>
</gene>
<evidence type="ECO:0000255" key="1">
    <source>
        <dbReference type="HAMAP-Rule" id="MF_01221"/>
    </source>
</evidence>
<accession>Q8ZSU3</accession>
<feature type="chain" id="PRO_0000070567" description="UPF0210 protein PAE3581">
    <location>
        <begin position="1"/>
        <end position="448"/>
    </location>
</feature>
<keyword id="KW-1185">Reference proteome</keyword>
<comment type="similarity">
    <text evidence="1">Belongs to the UPF0210 family.</text>
</comment>